<evidence type="ECO:0000250" key="1">
    <source>
        <dbReference type="UniProtKB" id="Q9XF91"/>
    </source>
</evidence>
<evidence type="ECO:0000255" key="2"/>
<evidence type="ECO:0000269" key="3">
    <source>
    </source>
</evidence>
<evidence type="ECO:0000303" key="4">
    <source>
    </source>
</evidence>
<evidence type="ECO:0000303" key="5">
    <source>
    </source>
</evidence>
<evidence type="ECO:0000305" key="6"/>
<reference key="1">
    <citation type="journal article" date="2000" name="Proc. Natl. Acad. Sci. U.S.A.">
        <title>Light stress-regulated two-helix proteins in Arabidopsis thaliana related to the chlorophyll a/b-binding gene family.</title>
        <authorList>
            <person name="Heddad M."/>
            <person name="Adamska I."/>
        </authorList>
    </citation>
    <scope>NUCLEOTIDE SEQUENCE [MRNA] (ISOFORM 1)</scope>
    <scope>INDUCTION BY LIGHT</scope>
    <scope>SUBCELLULAR LOCATION</scope>
    <source>
        <strain>cv. Columbia</strain>
    </source>
</reference>
<reference key="2">
    <citation type="journal article" date="1999" name="Nature">
        <title>Sequence and analysis of chromosome 2 of the plant Arabidopsis thaliana.</title>
        <authorList>
            <person name="Lin X."/>
            <person name="Kaul S."/>
            <person name="Rounsley S.D."/>
            <person name="Shea T.P."/>
            <person name="Benito M.-I."/>
            <person name="Town C.D."/>
            <person name="Fujii C.Y."/>
            <person name="Mason T.M."/>
            <person name="Bowman C.L."/>
            <person name="Barnstead M.E."/>
            <person name="Feldblyum T.V."/>
            <person name="Buell C.R."/>
            <person name="Ketchum K.A."/>
            <person name="Lee J.J."/>
            <person name="Ronning C.M."/>
            <person name="Koo H.L."/>
            <person name="Moffat K.S."/>
            <person name="Cronin L.A."/>
            <person name="Shen M."/>
            <person name="Pai G."/>
            <person name="Van Aken S."/>
            <person name="Umayam L."/>
            <person name="Tallon L.J."/>
            <person name="Gill J.E."/>
            <person name="Adams M.D."/>
            <person name="Carrera A.J."/>
            <person name="Creasy T.H."/>
            <person name="Goodman H.M."/>
            <person name="Somerville C.R."/>
            <person name="Copenhaver G.P."/>
            <person name="Preuss D."/>
            <person name="Nierman W.C."/>
            <person name="White O."/>
            <person name="Eisen J.A."/>
            <person name="Salzberg S.L."/>
            <person name="Fraser C.M."/>
            <person name="Venter J.C."/>
        </authorList>
    </citation>
    <scope>NUCLEOTIDE SEQUENCE [LARGE SCALE GENOMIC DNA]</scope>
    <source>
        <strain>cv. Columbia</strain>
    </source>
</reference>
<reference key="3">
    <citation type="journal article" date="2017" name="Plant J.">
        <title>Araport11: a complete reannotation of the Arabidopsis thaliana reference genome.</title>
        <authorList>
            <person name="Cheng C.Y."/>
            <person name="Krishnakumar V."/>
            <person name="Chan A.P."/>
            <person name="Thibaud-Nissen F."/>
            <person name="Schobel S."/>
            <person name="Town C.D."/>
        </authorList>
    </citation>
    <scope>GENOME REANNOTATION</scope>
    <source>
        <strain>cv. Columbia</strain>
    </source>
</reference>
<reference key="4">
    <citation type="journal article" date="2003" name="Science">
        <title>Empirical analysis of transcriptional activity in the Arabidopsis genome.</title>
        <authorList>
            <person name="Yamada K."/>
            <person name="Lim J."/>
            <person name="Dale J.M."/>
            <person name="Chen H."/>
            <person name="Shinn P."/>
            <person name="Palm C.J."/>
            <person name="Southwick A.M."/>
            <person name="Wu H.C."/>
            <person name="Kim C.J."/>
            <person name="Nguyen M."/>
            <person name="Pham P.K."/>
            <person name="Cheuk R.F."/>
            <person name="Karlin-Newmann G."/>
            <person name="Liu S.X."/>
            <person name="Lam B."/>
            <person name="Sakano H."/>
            <person name="Wu T."/>
            <person name="Yu G."/>
            <person name="Miranda M."/>
            <person name="Quach H.L."/>
            <person name="Tripp M."/>
            <person name="Chang C.H."/>
            <person name="Lee J.M."/>
            <person name="Toriumi M.J."/>
            <person name="Chan M.M."/>
            <person name="Tang C.C."/>
            <person name="Onodera C.S."/>
            <person name="Deng J.M."/>
            <person name="Akiyama K."/>
            <person name="Ansari Y."/>
            <person name="Arakawa T."/>
            <person name="Banh J."/>
            <person name="Banno F."/>
            <person name="Bowser L."/>
            <person name="Brooks S.Y."/>
            <person name="Carninci P."/>
            <person name="Chao Q."/>
            <person name="Choy N."/>
            <person name="Enju A."/>
            <person name="Goldsmith A.D."/>
            <person name="Gurjal M."/>
            <person name="Hansen N.F."/>
            <person name="Hayashizaki Y."/>
            <person name="Johnson-Hopson C."/>
            <person name="Hsuan V.W."/>
            <person name="Iida K."/>
            <person name="Karnes M."/>
            <person name="Khan S."/>
            <person name="Koesema E."/>
            <person name="Ishida J."/>
            <person name="Jiang P.X."/>
            <person name="Jones T."/>
            <person name="Kawai J."/>
            <person name="Kamiya A."/>
            <person name="Meyers C."/>
            <person name="Nakajima M."/>
            <person name="Narusaka M."/>
            <person name="Seki M."/>
            <person name="Sakurai T."/>
            <person name="Satou M."/>
            <person name="Tamse R."/>
            <person name="Vaysberg M."/>
            <person name="Wallender E.K."/>
            <person name="Wong C."/>
            <person name="Yamamura Y."/>
            <person name="Yuan S."/>
            <person name="Shinozaki K."/>
            <person name="Davis R.W."/>
            <person name="Theologis A."/>
            <person name="Ecker J.R."/>
        </authorList>
    </citation>
    <scope>NUCLEOTIDE SEQUENCE [LARGE SCALE MRNA] (ISOFORM 2)</scope>
    <source>
        <strain>cv. Columbia</strain>
    </source>
</reference>
<reference key="5">
    <citation type="submission" date="2002-03" db="EMBL/GenBank/DDBJ databases">
        <title>Full-length cDNA from Arabidopsis thaliana.</title>
        <authorList>
            <person name="Brover V.V."/>
            <person name="Troukhan M.E."/>
            <person name="Alexandrov N.A."/>
            <person name="Lu Y.-P."/>
            <person name="Flavell R.B."/>
            <person name="Feldmann K.A."/>
        </authorList>
    </citation>
    <scope>NUCLEOTIDE SEQUENCE [LARGE SCALE MRNA] (ISOFORM 1)</scope>
</reference>
<sequence length="202" mass="21989">MAMATRAIRYQLPSPRFRAPRCESSEPIKQIQIQQRPRGGDLAENGKIVLQPRLCTLRSYGSDMVIAKKDGGDGGGGGSDVELASPFFETLTDYIESSKKSQDFETISGRLAMIVFAVTVTEEIVTGNSLFKKLDVEGLSEAIGAGLAAMGCAAMFAWLTISRNRVGRIFTVSCNSFIDSLVDQIVDGLFYDTKPSDWSDDL</sequence>
<proteinExistence type="evidence at transcript level"/>
<keyword id="KW-0025">Alternative splicing</keyword>
<keyword id="KW-0150">Chloroplast</keyword>
<keyword id="KW-0472">Membrane</keyword>
<keyword id="KW-0602">Photosynthesis</keyword>
<keyword id="KW-0604">Photosystem II</keyword>
<keyword id="KW-0934">Plastid</keyword>
<keyword id="KW-1185">Reference proteome</keyword>
<keyword id="KW-0793">Thylakoid</keyword>
<keyword id="KW-0809">Transit peptide</keyword>
<keyword id="KW-0812">Transmembrane</keyword>
<keyword id="KW-1133">Transmembrane helix</keyword>
<dbReference type="EMBL" id="AF133717">
    <property type="protein sequence ID" value="AAF61626.1"/>
    <property type="molecule type" value="mRNA"/>
</dbReference>
<dbReference type="EMBL" id="AC007019">
    <property type="protein sequence ID" value="AAD20414.1"/>
    <property type="molecule type" value="Genomic_DNA"/>
</dbReference>
<dbReference type="EMBL" id="CP002685">
    <property type="protein sequence ID" value="AEC07247.1"/>
    <property type="molecule type" value="Genomic_DNA"/>
</dbReference>
<dbReference type="EMBL" id="AF386927">
    <property type="protein sequence ID" value="AAK62372.1"/>
    <property type="molecule type" value="mRNA"/>
</dbReference>
<dbReference type="EMBL" id="BT006554">
    <property type="protein sequence ID" value="AAP21362.1"/>
    <property type="molecule type" value="mRNA"/>
</dbReference>
<dbReference type="EMBL" id="AY084392">
    <property type="protein sequence ID" value="AAM60969.1"/>
    <property type="molecule type" value="mRNA"/>
</dbReference>
<dbReference type="PIR" id="D84607">
    <property type="entry name" value="D84607"/>
</dbReference>
<dbReference type="RefSeq" id="NP_565524.1">
    <molecule id="Q9SJ02-1"/>
    <property type="nucleotide sequence ID" value="NM_127766.3"/>
</dbReference>
<dbReference type="FunCoup" id="Q9SJ02">
    <property type="interactions" value="165"/>
</dbReference>
<dbReference type="STRING" id="3702.Q9SJ02"/>
<dbReference type="iPTMnet" id="Q9SJ02"/>
<dbReference type="PaxDb" id="3702-AT2G21970.1"/>
<dbReference type="ProteomicsDB" id="245216">
    <molecule id="Q9SJ02-1"/>
</dbReference>
<dbReference type="EnsemblPlants" id="AT2G21970.1">
    <molecule id="Q9SJ02-1"/>
    <property type="protein sequence ID" value="AT2G21970.1"/>
    <property type="gene ID" value="AT2G21970"/>
</dbReference>
<dbReference type="GeneID" id="816733"/>
<dbReference type="Gramene" id="AT2G21970.1">
    <molecule id="Q9SJ02-1"/>
    <property type="protein sequence ID" value="AT2G21970.1"/>
    <property type="gene ID" value="AT2G21970"/>
</dbReference>
<dbReference type="KEGG" id="ath:AT2G21970"/>
<dbReference type="Araport" id="AT2G21970"/>
<dbReference type="TAIR" id="AT2G21970">
    <property type="gene designation" value="SEP2"/>
</dbReference>
<dbReference type="eggNOG" id="ENOG502RXQW">
    <property type="taxonomic scope" value="Eukaryota"/>
</dbReference>
<dbReference type="HOGENOM" id="CLU_1373980_0_0_1"/>
<dbReference type="InParanoid" id="Q9SJ02"/>
<dbReference type="OMA" id="CAAIFAW"/>
<dbReference type="OrthoDB" id="1937750at2759"/>
<dbReference type="PRO" id="PR:Q9SJ02"/>
<dbReference type="Proteomes" id="UP000006548">
    <property type="component" value="Chromosome 2"/>
</dbReference>
<dbReference type="ExpressionAtlas" id="Q9SJ02">
    <property type="expression patterns" value="baseline and differential"/>
</dbReference>
<dbReference type="GO" id="GO:0009535">
    <property type="term" value="C:chloroplast thylakoid membrane"/>
    <property type="evidence" value="ECO:0000314"/>
    <property type="project" value="TAIR"/>
</dbReference>
<dbReference type="GO" id="GO:0009523">
    <property type="term" value="C:photosystem II"/>
    <property type="evidence" value="ECO:0007669"/>
    <property type="project" value="UniProtKB-KW"/>
</dbReference>
<dbReference type="GO" id="GO:0016168">
    <property type="term" value="F:chlorophyll binding"/>
    <property type="evidence" value="ECO:0000250"/>
    <property type="project" value="TAIR"/>
</dbReference>
<dbReference type="GO" id="GO:0071486">
    <property type="term" value="P:cellular response to high light intensity"/>
    <property type="evidence" value="ECO:0000270"/>
    <property type="project" value="UniProtKB"/>
</dbReference>
<dbReference type="GO" id="GO:0071492">
    <property type="term" value="P:cellular response to UV-A"/>
    <property type="evidence" value="ECO:0000270"/>
    <property type="project" value="UniProtKB"/>
</dbReference>
<dbReference type="GO" id="GO:0009765">
    <property type="term" value="P:photosynthesis, light harvesting"/>
    <property type="evidence" value="ECO:0000250"/>
    <property type="project" value="TAIR"/>
</dbReference>
<dbReference type="GO" id="GO:0009611">
    <property type="term" value="P:response to wounding"/>
    <property type="evidence" value="ECO:0000270"/>
    <property type="project" value="UniProtKB"/>
</dbReference>
<dbReference type="InterPro" id="IPR044971">
    <property type="entry name" value="SEP2"/>
</dbReference>
<dbReference type="PANTHER" id="PTHR36490">
    <property type="entry name" value="STRESS ENHANCED PROTEIN 2, CHLOROPLASTIC"/>
    <property type="match status" value="1"/>
</dbReference>
<dbReference type="PANTHER" id="PTHR36490:SF1">
    <property type="entry name" value="STRESS ENHANCED PROTEIN 2, CHLOROPLASTIC"/>
    <property type="match status" value="1"/>
</dbReference>
<comment type="function">
    <text evidence="1 6">May be involved in non-photochemical quenching, a process that maintains the balance between dissipation and utilization of light energy to minimize generation of oxidizing molecules, thereby protecting the plant against photo-oxidative damage (By similarity). May play a photoprotective role in the thylakoid membrane in response to light stress (Probable).</text>
</comment>
<comment type="subcellular location">
    <subcellularLocation>
        <location evidence="3">Plastid</location>
        <location evidence="3">Chloroplast thylakoid membrane</location>
        <topology evidence="2">Multi-pass membrane protein</topology>
    </subcellularLocation>
</comment>
<comment type="alternative products">
    <event type="alternative splicing"/>
    <isoform>
        <id>Q9SJ02-1</id>
        <name>1</name>
        <sequence type="displayed"/>
    </isoform>
    <isoform>
        <id>Q9SJ02-2</id>
        <name>2</name>
        <sequence type="described" ref="VSP_046518"/>
    </isoform>
</comment>
<comment type="induction">
    <text evidence="3">Present at low levels under low light conditions, but accumulates under high-intensity light. Induced by UV-A illumination. Fades out upon wounding.</text>
</comment>
<comment type="similarity">
    <text evidence="6">Belongs to the ELIP/psbS family.</text>
</comment>
<protein>
    <recommendedName>
        <fullName evidence="6">Stress enhanced protein 2, chloroplastic</fullName>
    </recommendedName>
</protein>
<gene>
    <name evidence="4" type="primary">SEP2</name>
    <name type="ordered locus">At2g21970</name>
    <name type="ORF">F7D8.29</name>
</gene>
<feature type="transit peptide" description="Chloroplast" evidence="2">
    <location>
        <begin position="1"/>
        <end position="60"/>
    </location>
</feature>
<feature type="chain" id="PRO_0000422368" description="Stress enhanced protein 2, chloroplastic">
    <location>
        <begin position="61"/>
        <end position="202"/>
    </location>
</feature>
<feature type="transmembrane region" description="Helical" evidence="2">
    <location>
        <begin position="111"/>
        <end position="131"/>
    </location>
</feature>
<feature type="transmembrane region" description="Helical" evidence="2">
    <location>
        <begin position="142"/>
        <end position="162"/>
    </location>
</feature>
<feature type="splice variant" id="VSP_046518" description="In isoform 2." evidence="5">
    <original>MAMATRAIRYQLPSPRFRAPRCESSEPIKQIQIQQ</original>
    <variation>MQG</variation>
    <location>
        <begin position="1"/>
        <end position="35"/>
    </location>
</feature>
<accession>Q9SJ02</accession>
<accession>Q94F34</accession>
<organism>
    <name type="scientific">Arabidopsis thaliana</name>
    <name type="common">Mouse-ear cress</name>
    <dbReference type="NCBI Taxonomy" id="3702"/>
    <lineage>
        <taxon>Eukaryota</taxon>
        <taxon>Viridiplantae</taxon>
        <taxon>Streptophyta</taxon>
        <taxon>Embryophyta</taxon>
        <taxon>Tracheophyta</taxon>
        <taxon>Spermatophyta</taxon>
        <taxon>Magnoliopsida</taxon>
        <taxon>eudicotyledons</taxon>
        <taxon>Gunneridae</taxon>
        <taxon>Pentapetalae</taxon>
        <taxon>rosids</taxon>
        <taxon>malvids</taxon>
        <taxon>Brassicales</taxon>
        <taxon>Brassicaceae</taxon>
        <taxon>Camelineae</taxon>
        <taxon>Arabidopsis</taxon>
    </lineage>
</organism>
<name>STEP2_ARATH</name>